<reference key="1">
    <citation type="submission" date="2007-07" db="EMBL/GenBank/DDBJ databases">
        <title>Complete sequence of chromosome of Shewanella baltica OS185.</title>
        <authorList>
            <consortium name="US DOE Joint Genome Institute"/>
            <person name="Copeland A."/>
            <person name="Lucas S."/>
            <person name="Lapidus A."/>
            <person name="Barry K."/>
            <person name="Glavina del Rio T."/>
            <person name="Dalin E."/>
            <person name="Tice H."/>
            <person name="Pitluck S."/>
            <person name="Sims D."/>
            <person name="Brettin T."/>
            <person name="Bruce D."/>
            <person name="Detter J.C."/>
            <person name="Han C."/>
            <person name="Schmutz J."/>
            <person name="Larimer F."/>
            <person name="Land M."/>
            <person name="Hauser L."/>
            <person name="Kyrpides N."/>
            <person name="Mikhailova N."/>
            <person name="Brettar I."/>
            <person name="Rodrigues J."/>
            <person name="Konstantinidis K."/>
            <person name="Tiedje J."/>
            <person name="Richardson P."/>
        </authorList>
    </citation>
    <scope>NUCLEOTIDE SEQUENCE [LARGE SCALE GENOMIC DNA]</scope>
    <source>
        <strain>OS185</strain>
    </source>
</reference>
<proteinExistence type="inferred from homology"/>
<name>TATB_SHEB8</name>
<protein>
    <recommendedName>
        <fullName evidence="1">Sec-independent protein translocase protein TatB</fullName>
    </recommendedName>
</protein>
<accession>A6WIE5</accession>
<keyword id="KW-0997">Cell inner membrane</keyword>
<keyword id="KW-1003">Cell membrane</keyword>
<keyword id="KW-0472">Membrane</keyword>
<keyword id="KW-0653">Protein transport</keyword>
<keyword id="KW-0811">Translocation</keyword>
<keyword id="KW-0812">Transmembrane</keyword>
<keyword id="KW-1133">Transmembrane helix</keyword>
<keyword id="KW-0813">Transport</keyword>
<dbReference type="EMBL" id="CP000753">
    <property type="protein sequence ID" value="ABS06584.1"/>
    <property type="molecule type" value="Genomic_DNA"/>
</dbReference>
<dbReference type="RefSeq" id="WP_006087112.1">
    <property type="nucleotide sequence ID" value="NC_009665.1"/>
</dbReference>
<dbReference type="SMR" id="A6WIE5"/>
<dbReference type="GeneID" id="11770766"/>
<dbReference type="KEGG" id="sbm:Shew185_0415"/>
<dbReference type="HOGENOM" id="CLU_086034_1_0_6"/>
<dbReference type="GO" id="GO:0033281">
    <property type="term" value="C:TAT protein transport complex"/>
    <property type="evidence" value="ECO:0007669"/>
    <property type="project" value="UniProtKB-UniRule"/>
</dbReference>
<dbReference type="GO" id="GO:0008320">
    <property type="term" value="F:protein transmembrane transporter activity"/>
    <property type="evidence" value="ECO:0007669"/>
    <property type="project" value="UniProtKB-UniRule"/>
</dbReference>
<dbReference type="GO" id="GO:0043953">
    <property type="term" value="P:protein transport by the Tat complex"/>
    <property type="evidence" value="ECO:0007669"/>
    <property type="project" value="UniProtKB-UniRule"/>
</dbReference>
<dbReference type="Gene3D" id="1.20.5.3310">
    <property type="match status" value="1"/>
</dbReference>
<dbReference type="HAMAP" id="MF_00237">
    <property type="entry name" value="TatB"/>
    <property type="match status" value="1"/>
</dbReference>
<dbReference type="InterPro" id="IPR003369">
    <property type="entry name" value="TatA/B/E"/>
</dbReference>
<dbReference type="InterPro" id="IPR018448">
    <property type="entry name" value="TatB"/>
</dbReference>
<dbReference type="NCBIfam" id="TIGR01410">
    <property type="entry name" value="tatB"/>
    <property type="match status" value="1"/>
</dbReference>
<dbReference type="PANTHER" id="PTHR33162">
    <property type="entry name" value="SEC-INDEPENDENT PROTEIN TRANSLOCASE PROTEIN TATA, CHLOROPLASTIC"/>
    <property type="match status" value="1"/>
</dbReference>
<dbReference type="PANTHER" id="PTHR33162:SF1">
    <property type="entry name" value="SEC-INDEPENDENT PROTEIN TRANSLOCASE PROTEIN TATA, CHLOROPLASTIC"/>
    <property type="match status" value="1"/>
</dbReference>
<dbReference type="Pfam" id="PF02416">
    <property type="entry name" value="TatA_B_E"/>
    <property type="match status" value="1"/>
</dbReference>
<dbReference type="PRINTS" id="PR01506">
    <property type="entry name" value="TATBPROTEIN"/>
</dbReference>
<feature type="chain" id="PRO_1000044463" description="Sec-independent protein translocase protein TatB">
    <location>
        <begin position="1"/>
        <end position="171"/>
    </location>
</feature>
<feature type="transmembrane region" description="Helical" evidence="1">
    <location>
        <begin position="2"/>
        <end position="22"/>
    </location>
</feature>
<feature type="region of interest" description="Disordered" evidence="2">
    <location>
        <begin position="69"/>
        <end position="171"/>
    </location>
</feature>
<feature type="compositionally biased region" description="Polar residues" evidence="2">
    <location>
        <begin position="88"/>
        <end position="97"/>
    </location>
</feature>
<feature type="compositionally biased region" description="Low complexity" evidence="2">
    <location>
        <begin position="114"/>
        <end position="130"/>
    </location>
</feature>
<feature type="compositionally biased region" description="Low complexity" evidence="2">
    <location>
        <begin position="138"/>
        <end position="158"/>
    </location>
</feature>
<feature type="compositionally biased region" description="Polar residues" evidence="2">
    <location>
        <begin position="160"/>
        <end position="171"/>
    </location>
</feature>
<gene>
    <name evidence="1" type="primary">tatB</name>
    <name type="ordered locus">Shew185_0415</name>
</gene>
<sequence length="171" mass="18317">MFDGIGFMELLLIGVLGLVVLGPERLPVAVRSITSWIRAMKRMANSVKEELEQELKIEQLHADLKKAESKGLSNLSPELKESIEQLKQAAQSVNRPYQVQDPVKDTPAPENQIHSPVSSTVQTSQVHTSPAQASQANPTATVEASPTSASPATPSEPSQGADTRSNPKANG</sequence>
<comment type="function">
    <text evidence="1">Part of the twin-arginine translocation (Tat) system that transports large folded proteins containing a characteristic twin-arginine motif in their signal peptide across membranes. Together with TatC, TatB is part of a receptor directly interacting with Tat signal peptides. TatB may form an oligomeric binding site that transiently accommodates folded Tat precursor proteins before their translocation.</text>
</comment>
<comment type="subunit">
    <text evidence="1">The Tat system comprises two distinct complexes: a TatABC complex, containing multiple copies of TatA, TatB and TatC subunits, and a separate TatA complex, containing only TatA subunits. Substrates initially bind to the TatABC complex, which probably triggers association of the separate TatA complex to form the active translocon.</text>
</comment>
<comment type="subcellular location">
    <subcellularLocation>
        <location evidence="1">Cell inner membrane</location>
        <topology evidence="1">Single-pass membrane protein</topology>
    </subcellularLocation>
</comment>
<comment type="similarity">
    <text evidence="1">Belongs to the TatB family.</text>
</comment>
<evidence type="ECO:0000255" key="1">
    <source>
        <dbReference type="HAMAP-Rule" id="MF_00237"/>
    </source>
</evidence>
<evidence type="ECO:0000256" key="2">
    <source>
        <dbReference type="SAM" id="MobiDB-lite"/>
    </source>
</evidence>
<organism>
    <name type="scientific">Shewanella baltica (strain OS185)</name>
    <dbReference type="NCBI Taxonomy" id="402882"/>
    <lineage>
        <taxon>Bacteria</taxon>
        <taxon>Pseudomonadati</taxon>
        <taxon>Pseudomonadota</taxon>
        <taxon>Gammaproteobacteria</taxon>
        <taxon>Alteromonadales</taxon>
        <taxon>Shewanellaceae</taxon>
        <taxon>Shewanella</taxon>
    </lineage>
</organism>